<comment type="function">
    <text evidence="4">The S-layer is a paracrystalline mono-layered assembly of proteins which coat the surface of bacteria.</text>
</comment>
<comment type="subcellular location">
    <subcellularLocation>
        <location>Secreted</location>
        <location>Cell wall</location>
        <location>S-layer</location>
    </subcellularLocation>
</comment>
<feature type="signal peptide" evidence="1">
    <location>
        <begin position="1"/>
        <end position="29"/>
    </location>
</feature>
<feature type="chain" id="PRO_0000284767" description="S-layer protein" evidence="2">
    <location>
        <begin position="30"/>
        <end position="816"/>
    </location>
</feature>
<feature type="domain" description="SLH 1" evidence="3">
    <location>
        <begin position="30"/>
        <end position="93"/>
    </location>
</feature>
<feature type="domain" description="SLH 2" evidence="3">
    <location>
        <begin position="94"/>
        <end position="150"/>
    </location>
</feature>
<feature type="domain" description="SLH 3" evidence="3">
    <location>
        <begin position="152"/>
        <end position="215"/>
    </location>
</feature>
<feature type="domain" description="BIG2" evidence="2">
    <location>
        <begin position="403"/>
        <end position="480"/>
    </location>
</feature>
<accession>Q9ZES5</accession>
<sequence>MAKTNSYKKVIAGTMTAAMVAGVVSPVAAAGKSFPDVPADHWGIDSINYLVEKGAVTGNDKGMFEPGKELTRAEAATMMAQILNLPIDKDAKPSFADSQGQWYTPFIAAVEKAGVIKGTGNGFEPNGKIDRVSMASLLVEAYKLDTKVNGTPATKFKDLETLNWGKEKANILVELGISVGTTADKWEPKKTVTKAEAAQFIAKTDKQFGTEVAKVESAKAVTTQKVEVKFSKAVEKLTKEDVKLANKANNDKVLVKDVKLSEDKKSATVELYSNLAAKQTYTVDVNKVGKVEVTVGSLEAKTIEMADQTVVADEPTALKYTVKDENGTEVVSPAGIEFVTPAAEKINAKGEITLAKGTSTTVKAVYKKDGKVVAESKEVKVSAEGTAVASISNWTVAAEKADFTSKDFKQNDKVYEGDNVSVQVELKDQFNNVVNNVKAEYESLNTEVAVVDKATGKVTVLSAGKAPVKVTVKDSKGKELVSKTVEIEAFAQKAMKEIKLEKTNVALSTKDVTDFKVKAPVLDQYGKEFAAPVEVKVLDKDGKELKEQKLVAKYENKELVLNAHGQEAGKYTVELTAKSGKKEVKSKLALELKAPGVFSKFDVRGLENELDKYVTEENKKNEMVVSVLPVDANGLVLREKEAATLKVTTTDKDGKVVDATSGQVAVNDAAGTITVGNEAKAGETYKVTVVADGKLITTHSFKVVDTAPAAKKLAVDFTSTSLNEVAQGSELKTALLNILSVDGVPATTAGATVTDVKFVSADTNVVSEETAKFGTKGSTSIFVKELTVKKGEQTQKVELDKPVRVDVSIKEVKEVK</sequence>
<keyword id="KW-0134">Cell wall</keyword>
<keyword id="KW-0903">Direct protein sequencing</keyword>
<keyword id="KW-0677">Repeat</keyword>
<keyword id="KW-0701">S-layer</keyword>
<keyword id="KW-0964">Secreted</keyword>
<keyword id="KW-0732">Signal</keyword>
<dbReference type="EMBL" id="AJ012290">
    <property type="protein sequence ID" value="CAA09981.1"/>
    <property type="molecule type" value="Genomic_DNA"/>
</dbReference>
<dbReference type="RefSeq" id="WP_060629723.1">
    <property type="nucleotide sequence ID" value="NZ_NFEL01000053.1"/>
</dbReference>
<dbReference type="SMR" id="Q9ZES5"/>
<dbReference type="GO" id="GO:0005576">
    <property type="term" value="C:extracellular region"/>
    <property type="evidence" value="ECO:0007669"/>
    <property type="project" value="UniProtKB-KW"/>
</dbReference>
<dbReference type="GO" id="GO:0030115">
    <property type="term" value="C:S-layer"/>
    <property type="evidence" value="ECO:0007669"/>
    <property type="project" value="UniProtKB-SubCell"/>
</dbReference>
<dbReference type="GO" id="GO:0031160">
    <property type="term" value="C:spore wall"/>
    <property type="evidence" value="ECO:0000314"/>
    <property type="project" value="UniProtKB"/>
</dbReference>
<dbReference type="FunFam" id="2.60.40.1080:FF:000010">
    <property type="entry name" value="S-layer protein"/>
    <property type="match status" value="1"/>
</dbReference>
<dbReference type="Gene3D" id="2.60.40.1080">
    <property type="match status" value="1"/>
</dbReference>
<dbReference type="Gene3D" id="2.60.40.1220">
    <property type="match status" value="1"/>
</dbReference>
<dbReference type="InterPro" id="IPR003343">
    <property type="entry name" value="Big_2"/>
</dbReference>
<dbReference type="InterPro" id="IPR051465">
    <property type="entry name" value="Cell_Envelope_Struct_Comp"/>
</dbReference>
<dbReference type="InterPro" id="IPR014755">
    <property type="entry name" value="Cu-Rt/internalin_Ig-like"/>
</dbReference>
<dbReference type="InterPro" id="IPR008964">
    <property type="entry name" value="Invasin/intimin_cell_adhesion"/>
</dbReference>
<dbReference type="InterPro" id="IPR032812">
    <property type="entry name" value="SbsA_Ig"/>
</dbReference>
<dbReference type="InterPro" id="IPR001119">
    <property type="entry name" value="SLH_dom"/>
</dbReference>
<dbReference type="PANTHER" id="PTHR43308:SF1">
    <property type="entry name" value="OUTER MEMBRANE PROTEIN ALPHA"/>
    <property type="match status" value="1"/>
</dbReference>
<dbReference type="PANTHER" id="PTHR43308">
    <property type="entry name" value="OUTER MEMBRANE PROTEIN ALPHA-RELATED"/>
    <property type="match status" value="1"/>
</dbReference>
<dbReference type="Pfam" id="PF02368">
    <property type="entry name" value="Big_2"/>
    <property type="match status" value="1"/>
</dbReference>
<dbReference type="Pfam" id="PF13205">
    <property type="entry name" value="Big_5"/>
    <property type="match status" value="1"/>
</dbReference>
<dbReference type="Pfam" id="PF00395">
    <property type="entry name" value="SLH"/>
    <property type="match status" value="2"/>
</dbReference>
<dbReference type="SMART" id="SM00635">
    <property type="entry name" value="BID_2"/>
    <property type="match status" value="1"/>
</dbReference>
<dbReference type="SUPFAM" id="SSF49373">
    <property type="entry name" value="Invasin/intimin cell-adhesion fragments"/>
    <property type="match status" value="1"/>
</dbReference>
<dbReference type="PROSITE" id="PS51272">
    <property type="entry name" value="SLH"/>
    <property type="match status" value="3"/>
</dbReference>
<reference evidence="4 5" key="1">
    <citation type="journal article" date="2001" name="Wei Sheng Wu Xue Bao">
        <title>Cloning of parasporal body protein gene resembling to S-layer protein genes from Bacillus thuringiensis CTC strain.</title>
        <authorList>
            <person name="Sun M."/>
            <person name="Zhu C."/>
            <person name="Yu Z."/>
        </authorList>
    </citation>
    <scope>NUCLEOTIDE SEQUENCE [GENOMIC DNA]</scope>
    <scope>PROTEIN SEQUENCE OF N-TERMINUS</scope>
    <source>
        <strain evidence="5">CTC</strain>
    </source>
</reference>
<protein>
    <recommendedName>
        <fullName>S-layer protein</fullName>
    </recommendedName>
    <alternativeName>
        <fullName>Parasporal protein</fullName>
    </alternativeName>
</protein>
<name>SLAP_BACTF</name>
<gene>
    <name evidence="5" type="primary">ctc</name>
</gene>
<organism>
    <name type="scientific">Bacillus thuringiensis subsp. finitimus</name>
    <dbReference type="NCBI Taxonomy" id="29337"/>
    <lineage>
        <taxon>Bacteria</taxon>
        <taxon>Bacillati</taxon>
        <taxon>Bacillota</taxon>
        <taxon>Bacilli</taxon>
        <taxon>Bacillales</taxon>
        <taxon>Bacillaceae</taxon>
        <taxon>Bacillus</taxon>
        <taxon>Bacillus cereus group</taxon>
    </lineage>
</organism>
<proteinExistence type="evidence at protein level"/>
<evidence type="ECO:0000250" key="1">
    <source>
        <dbReference type="UniProtKB" id="P49051"/>
    </source>
</evidence>
<evidence type="ECO:0000255" key="2"/>
<evidence type="ECO:0000255" key="3">
    <source>
        <dbReference type="PROSITE-ProRule" id="PRU00777"/>
    </source>
</evidence>
<evidence type="ECO:0000305" key="4"/>
<evidence type="ECO:0000312" key="5">
    <source>
        <dbReference type="EMBL" id="CAA09981.1"/>
    </source>
</evidence>